<name>ACYP_DEHMC</name>
<feature type="chain" id="PRO_0000326698" description="Acylphosphatase">
    <location>
        <begin position="1"/>
        <end position="91"/>
    </location>
</feature>
<feature type="domain" description="Acylphosphatase-like" evidence="1">
    <location>
        <begin position="3"/>
        <end position="91"/>
    </location>
</feature>
<feature type="active site" evidence="1">
    <location>
        <position position="18"/>
    </location>
</feature>
<feature type="active site" evidence="1">
    <location>
        <position position="36"/>
    </location>
</feature>
<evidence type="ECO:0000255" key="1">
    <source>
        <dbReference type="PROSITE-ProRule" id="PRU00520"/>
    </source>
</evidence>
<evidence type="ECO:0000305" key="2"/>
<reference key="1">
    <citation type="journal article" date="2005" name="Nat. Biotechnol.">
        <title>Genome sequence of the chlorinated compound-respiring bacterium Dehalococcoides species strain CBDB1.</title>
        <authorList>
            <person name="Kube M."/>
            <person name="Beck A."/>
            <person name="Zinder S.H."/>
            <person name="Kuhl H."/>
            <person name="Reinhardt R."/>
            <person name="Adrian L."/>
        </authorList>
    </citation>
    <scope>NUCLEOTIDE SEQUENCE [LARGE SCALE GENOMIC DNA]</scope>
    <source>
        <strain>CBDB1</strain>
    </source>
</reference>
<sequence length="91" mass="10160">MHCLRAIVKGKVQGVYFRDFTRTQATRLGLCGYAKNLANGAEVEVVAEGDKDALLEFLDLLRSGPPRAEVKDVETSWETATANYSDFRIKH</sequence>
<accession>Q3ZXY7</accession>
<organism>
    <name type="scientific">Dehalococcoides mccartyi (strain CBDB1)</name>
    <dbReference type="NCBI Taxonomy" id="255470"/>
    <lineage>
        <taxon>Bacteria</taxon>
        <taxon>Bacillati</taxon>
        <taxon>Chloroflexota</taxon>
        <taxon>Dehalococcoidia</taxon>
        <taxon>Dehalococcoidales</taxon>
        <taxon>Dehalococcoidaceae</taxon>
        <taxon>Dehalococcoides</taxon>
    </lineage>
</organism>
<dbReference type="EC" id="3.6.1.7"/>
<dbReference type="EMBL" id="AJ965256">
    <property type="protein sequence ID" value="CAI83113.1"/>
    <property type="molecule type" value="Genomic_DNA"/>
</dbReference>
<dbReference type="RefSeq" id="WP_011309464.1">
    <property type="nucleotide sequence ID" value="NC_007356.1"/>
</dbReference>
<dbReference type="SMR" id="Q3ZXY7"/>
<dbReference type="KEGG" id="deh:cbdbA998"/>
<dbReference type="HOGENOM" id="CLU_141932_1_0_0"/>
<dbReference type="Proteomes" id="UP000000433">
    <property type="component" value="Chromosome"/>
</dbReference>
<dbReference type="GO" id="GO:0003998">
    <property type="term" value="F:acylphosphatase activity"/>
    <property type="evidence" value="ECO:0007669"/>
    <property type="project" value="UniProtKB-EC"/>
</dbReference>
<dbReference type="Gene3D" id="3.30.70.100">
    <property type="match status" value="1"/>
</dbReference>
<dbReference type="InterPro" id="IPR020456">
    <property type="entry name" value="Acylphosphatase"/>
</dbReference>
<dbReference type="InterPro" id="IPR001792">
    <property type="entry name" value="Acylphosphatase-like_dom"/>
</dbReference>
<dbReference type="InterPro" id="IPR036046">
    <property type="entry name" value="Acylphosphatase-like_dom_sf"/>
</dbReference>
<dbReference type="InterPro" id="IPR017968">
    <property type="entry name" value="Acylphosphatase_CS"/>
</dbReference>
<dbReference type="NCBIfam" id="NF011021">
    <property type="entry name" value="PRK14450.1"/>
    <property type="match status" value="1"/>
</dbReference>
<dbReference type="PANTHER" id="PTHR47268">
    <property type="entry name" value="ACYLPHOSPHATASE"/>
    <property type="match status" value="1"/>
</dbReference>
<dbReference type="PANTHER" id="PTHR47268:SF4">
    <property type="entry name" value="ACYLPHOSPHATASE"/>
    <property type="match status" value="1"/>
</dbReference>
<dbReference type="Pfam" id="PF00708">
    <property type="entry name" value="Acylphosphatase"/>
    <property type="match status" value="1"/>
</dbReference>
<dbReference type="SUPFAM" id="SSF54975">
    <property type="entry name" value="Acylphosphatase/BLUF domain-like"/>
    <property type="match status" value="1"/>
</dbReference>
<dbReference type="PROSITE" id="PS00150">
    <property type="entry name" value="ACYLPHOSPHATASE_1"/>
    <property type="match status" value="1"/>
</dbReference>
<dbReference type="PROSITE" id="PS51160">
    <property type="entry name" value="ACYLPHOSPHATASE_3"/>
    <property type="match status" value="1"/>
</dbReference>
<gene>
    <name type="primary">acyP</name>
    <name type="ordered locus">cbdbA998</name>
</gene>
<protein>
    <recommendedName>
        <fullName>Acylphosphatase</fullName>
        <ecNumber>3.6.1.7</ecNumber>
    </recommendedName>
    <alternativeName>
        <fullName>Acylphosphate phosphohydrolase</fullName>
    </alternativeName>
</protein>
<keyword id="KW-0378">Hydrolase</keyword>
<proteinExistence type="inferred from homology"/>
<comment type="catalytic activity">
    <reaction>
        <text>an acyl phosphate + H2O = a carboxylate + phosphate + H(+)</text>
        <dbReference type="Rhea" id="RHEA:14965"/>
        <dbReference type="ChEBI" id="CHEBI:15377"/>
        <dbReference type="ChEBI" id="CHEBI:15378"/>
        <dbReference type="ChEBI" id="CHEBI:29067"/>
        <dbReference type="ChEBI" id="CHEBI:43474"/>
        <dbReference type="ChEBI" id="CHEBI:59918"/>
        <dbReference type="EC" id="3.6.1.7"/>
    </reaction>
</comment>
<comment type="similarity">
    <text evidence="2">Belongs to the acylphosphatase family.</text>
</comment>